<name>ATPD_SALPC</name>
<feature type="chain" id="PRO_1000184786" description="ATP synthase subunit delta">
    <location>
        <begin position="1"/>
        <end position="177"/>
    </location>
</feature>
<reference key="1">
    <citation type="journal article" date="2009" name="PLoS ONE">
        <title>Salmonella paratyphi C: genetic divergence from Salmonella choleraesuis and pathogenic convergence with Salmonella typhi.</title>
        <authorList>
            <person name="Liu W.-Q."/>
            <person name="Feng Y."/>
            <person name="Wang Y."/>
            <person name="Zou Q.-H."/>
            <person name="Chen F."/>
            <person name="Guo J.-T."/>
            <person name="Peng Y.-H."/>
            <person name="Jin Y."/>
            <person name="Li Y.-G."/>
            <person name="Hu S.-N."/>
            <person name="Johnston R.N."/>
            <person name="Liu G.-R."/>
            <person name="Liu S.-L."/>
        </authorList>
    </citation>
    <scope>NUCLEOTIDE SEQUENCE [LARGE SCALE GENOMIC DNA]</scope>
    <source>
        <strain>RKS4594</strain>
    </source>
</reference>
<comment type="function">
    <text evidence="1">F(1)F(0) ATP synthase produces ATP from ADP in the presence of a proton or sodium gradient. F-type ATPases consist of two structural domains, F(1) containing the extramembraneous catalytic core and F(0) containing the membrane proton channel, linked together by a central stalk and a peripheral stalk. During catalysis, ATP synthesis in the catalytic domain of F(1) is coupled via a rotary mechanism of the central stalk subunits to proton translocation.</text>
</comment>
<comment type="function">
    <text evidence="1">This protein is part of the stalk that links CF(0) to CF(1). It either transmits conformational changes from CF(0) to CF(1) or is implicated in proton conduction.</text>
</comment>
<comment type="subunit">
    <text evidence="1">F-type ATPases have 2 components, F(1) - the catalytic core - and F(0) - the membrane proton channel. F(1) has five subunits: alpha(3), beta(3), gamma(1), delta(1), epsilon(1). F(0) has three main subunits: a(1), b(2) and c(10-14). The alpha and beta chains form an alternating ring which encloses part of the gamma chain. F(1) is attached to F(0) by a central stalk formed by the gamma and epsilon chains, while a peripheral stalk is formed by the delta and b chains.</text>
</comment>
<comment type="subcellular location">
    <subcellularLocation>
        <location evidence="1">Cell inner membrane</location>
        <topology evidence="1">Peripheral membrane protein</topology>
    </subcellularLocation>
</comment>
<comment type="similarity">
    <text evidence="1">Belongs to the ATPase delta chain family.</text>
</comment>
<sequence>MSEFVTVARPYAKAAFDFAVEHQSVERWQDMLAFAAEVTKNEQMAELLSGALAPETLAESFIAVCGEQLDENGQNLIRVMAENNRLNALPDVLEQFIHLRAASEATSEVEVTSATALSEEQLSKISAAMEKRLSRKVKLNCKIDKSVMAGVIIRAGDMVIDGSVRGRLERLADVLQS</sequence>
<accession>C0Q2N5</accession>
<gene>
    <name evidence="1" type="primary">atpH</name>
    <name type="ordered locus">SPC_3953</name>
</gene>
<proteinExistence type="inferred from homology"/>
<protein>
    <recommendedName>
        <fullName evidence="1">ATP synthase subunit delta</fullName>
    </recommendedName>
    <alternativeName>
        <fullName evidence="1">ATP synthase F(1) sector subunit delta</fullName>
    </alternativeName>
    <alternativeName>
        <fullName evidence="1">F-type ATPase subunit delta</fullName>
        <shortName evidence="1">F-ATPase subunit delta</shortName>
    </alternativeName>
</protein>
<evidence type="ECO:0000255" key="1">
    <source>
        <dbReference type="HAMAP-Rule" id="MF_01416"/>
    </source>
</evidence>
<dbReference type="EMBL" id="CP000857">
    <property type="protein sequence ID" value="ACN48021.1"/>
    <property type="molecule type" value="Genomic_DNA"/>
</dbReference>
<dbReference type="RefSeq" id="WP_001288957.1">
    <property type="nucleotide sequence ID" value="NC_012125.1"/>
</dbReference>
<dbReference type="SMR" id="C0Q2N5"/>
<dbReference type="KEGG" id="sei:SPC_3953"/>
<dbReference type="HOGENOM" id="CLU_085114_3_0_6"/>
<dbReference type="Proteomes" id="UP000001599">
    <property type="component" value="Chromosome"/>
</dbReference>
<dbReference type="GO" id="GO:0005886">
    <property type="term" value="C:plasma membrane"/>
    <property type="evidence" value="ECO:0007669"/>
    <property type="project" value="UniProtKB-SubCell"/>
</dbReference>
<dbReference type="GO" id="GO:0045259">
    <property type="term" value="C:proton-transporting ATP synthase complex"/>
    <property type="evidence" value="ECO:0007669"/>
    <property type="project" value="UniProtKB-KW"/>
</dbReference>
<dbReference type="GO" id="GO:0046933">
    <property type="term" value="F:proton-transporting ATP synthase activity, rotational mechanism"/>
    <property type="evidence" value="ECO:0007669"/>
    <property type="project" value="UniProtKB-UniRule"/>
</dbReference>
<dbReference type="FunFam" id="1.10.520.20:FF:000001">
    <property type="entry name" value="ATP synthase subunit delta"/>
    <property type="match status" value="1"/>
</dbReference>
<dbReference type="Gene3D" id="1.10.520.20">
    <property type="entry name" value="N-terminal domain of the delta subunit of the F1F0-ATP synthase"/>
    <property type="match status" value="1"/>
</dbReference>
<dbReference type="HAMAP" id="MF_01416">
    <property type="entry name" value="ATP_synth_delta_bact"/>
    <property type="match status" value="1"/>
</dbReference>
<dbReference type="InterPro" id="IPR026015">
    <property type="entry name" value="ATP_synth_OSCP/delta_N_sf"/>
</dbReference>
<dbReference type="InterPro" id="IPR020781">
    <property type="entry name" value="ATPase_OSCP/d_CS"/>
</dbReference>
<dbReference type="InterPro" id="IPR000711">
    <property type="entry name" value="ATPase_OSCP/dsu"/>
</dbReference>
<dbReference type="NCBIfam" id="TIGR01145">
    <property type="entry name" value="ATP_synt_delta"/>
    <property type="match status" value="1"/>
</dbReference>
<dbReference type="NCBIfam" id="NF004402">
    <property type="entry name" value="PRK05758.2-2"/>
    <property type="match status" value="1"/>
</dbReference>
<dbReference type="NCBIfam" id="NF004404">
    <property type="entry name" value="PRK05758.2-5"/>
    <property type="match status" value="1"/>
</dbReference>
<dbReference type="PANTHER" id="PTHR11910">
    <property type="entry name" value="ATP SYNTHASE DELTA CHAIN"/>
    <property type="match status" value="1"/>
</dbReference>
<dbReference type="Pfam" id="PF00213">
    <property type="entry name" value="OSCP"/>
    <property type="match status" value="1"/>
</dbReference>
<dbReference type="PRINTS" id="PR00125">
    <property type="entry name" value="ATPASEDELTA"/>
</dbReference>
<dbReference type="SUPFAM" id="SSF47928">
    <property type="entry name" value="N-terminal domain of the delta subunit of the F1F0-ATP synthase"/>
    <property type="match status" value="1"/>
</dbReference>
<dbReference type="PROSITE" id="PS00389">
    <property type="entry name" value="ATPASE_DELTA"/>
    <property type="match status" value="1"/>
</dbReference>
<keyword id="KW-0066">ATP synthesis</keyword>
<keyword id="KW-0997">Cell inner membrane</keyword>
<keyword id="KW-1003">Cell membrane</keyword>
<keyword id="KW-0139">CF(1)</keyword>
<keyword id="KW-0375">Hydrogen ion transport</keyword>
<keyword id="KW-0406">Ion transport</keyword>
<keyword id="KW-0472">Membrane</keyword>
<keyword id="KW-0813">Transport</keyword>
<organism>
    <name type="scientific">Salmonella paratyphi C (strain RKS4594)</name>
    <dbReference type="NCBI Taxonomy" id="476213"/>
    <lineage>
        <taxon>Bacteria</taxon>
        <taxon>Pseudomonadati</taxon>
        <taxon>Pseudomonadota</taxon>
        <taxon>Gammaproteobacteria</taxon>
        <taxon>Enterobacterales</taxon>
        <taxon>Enterobacteriaceae</taxon>
        <taxon>Salmonella</taxon>
    </lineage>
</organism>